<comment type="function">
    <text evidence="1">Catalyzes the hydrolytic cleavage of the carbon-nitrogen bond in imidazolone-5-propanoate to yield N-formimidoyl-L-glutamate. It is the third step in the universal histidine degradation pathway.</text>
</comment>
<comment type="catalytic activity">
    <reaction evidence="1">
        <text>4-imidazolone-5-propanoate + H2O = N-formimidoyl-L-glutamate</text>
        <dbReference type="Rhea" id="RHEA:23660"/>
        <dbReference type="ChEBI" id="CHEBI:15377"/>
        <dbReference type="ChEBI" id="CHEBI:58928"/>
        <dbReference type="ChEBI" id="CHEBI:77893"/>
        <dbReference type="EC" id="3.5.2.7"/>
    </reaction>
</comment>
<comment type="cofactor">
    <cofactor evidence="1">
        <name>Zn(2+)</name>
        <dbReference type="ChEBI" id="CHEBI:29105"/>
    </cofactor>
    <cofactor evidence="1">
        <name>Fe(3+)</name>
        <dbReference type="ChEBI" id="CHEBI:29034"/>
    </cofactor>
    <text evidence="1">Binds 1 zinc or iron ion per subunit.</text>
</comment>
<comment type="pathway">
    <text evidence="1">Amino-acid degradation; L-histidine degradation into L-glutamate; N-formimidoyl-L-glutamate from L-histidine: step 3/3.</text>
</comment>
<comment type="subcellular location">
    <subcellularLocation>
        <location evidence="1">Cytoplasm</location>
    </subcellularLocation>
</comment>
<comment type="similarity">
    <text evidence="1">Belongs to the metallo-dependent hydrolases superfamily. HutI family.</text>
</comment>
<organism>
    <name type="scientific">Bacillus mycoides (strain KBAB4)</name>
    <name type="common">Bacillus weihenstephanensis</name>
    <dbReference type="NCBI Taxonomy" id="315730"/>
    <lineage>
        <taxon>Bacteria</taxon>
        <taxon>Bacillati</taxon>
        <taxon>Bacillota</taxon>
        <taxon>Bacilli</taxon>
        <taxon>Bacillales</taxon>
        <taxon>Bacillaceae</taxon>
        <taxon>Bacillus</taxon>
        <taxon>Bacillus cereus group</taxon>
    </lineage>
</organism>
<evidence type="ECO:0000255" key="1">
    <source>
        <dbReference type="HAMAP-Rule" id="MF_00372"/>
    </source>
</evidence>
<reference key="1">
    <citation type="journal article" date="2008" name="Chem. Biol. Interact.">
        <title>Extending the Bacillus cereus group genomics to putative food-borne pathogens of different toxicity.</title>
        <authorList>
            <person name="Lapidus A."/>
            <person name="Goltsman E."/>
            <person name="Auger S."/>
            <person name="Galleron N."/>
            <person name="Segurens B."/>
            <person name="Dossat C."/>
            <person name="Land M.L."/>
            <person name="Broussolle V."/>
            <person name="Brillard J."/>
            <person name="Guinebretiere M.-H."/>
            <person name="Sanchis V."/>
            <person name="Nguen-the C."/>
            <person name="Lereclus D."/>
            <person name="Richardson P."/>
            <person name="Wincker P."/>
            <person name="Weissenbach J."/>
            <person name="Ehrlich S.D."/>
            <person name="Sorokin A."/>
        </authorList>
    </citation>
    <scope>NUCLEOTIDE SEQUENCE [LARGE SCALE GENOMIC DNA]</scope>
    <source>
        <strain>KBAB4</strain>
    </source>
</reference>
<dbReference type="EC" id="3.5.2.7" evidence="1"/>
<dbReference type="EMBL" id="CP000903">
    <property type="protein sequence ID" value="ABY44512.1"/>
    <property type="molecule type" value="Genomic_DNA"/>
</dbReference>
<dbReference type="RefSeq" id="WP_012261421.1">
    <property type="nucleotide sequence ID" value="NC_010184.1"/>
</dbReference>
<dbReference type="SMR" id="A9VPT6"/>
<dbReference type="KEGG" id="bwe:BcerKBAB4_3337"/>
<dbReference type="eggNOG" id="COG1228">
    <property type="taxonomic scope" value="Bacteria"/>
</dbReference>
<dbReference type="HOGENOM" id="CLU_041647_0_1_9"/>
<dbReference type="UniPathway" id="UPA00379">
    <property type="reaction ID" value="UER00551"/>
</dbReference>
<dbReference type="Proteomes" id="UP000002154">
    <property type="component" value="Chromosome"/>
</dbReference>
<dbReference type="GO" id="GO:0005737">
    <property type="term" value="C:cytoplasm"/>
    <property type="evidence" value="ECO:0007669"/>
    <property type="project" value="UniProtKB-SubCell"/>
</dbReference>
<dbReference type="GO" id="GO:0050480">
    <property type="term" value="F:imidazolonepropionase activity"/>
    <property type="evidence" value="ECO:0007669"/>
    <property type="project" value="UniProtKB-UniRule"/>
</dbReference>
<dbReference type="GO" id="GO:0005506">
    <property type="term" value="F:iron ion binding"/>
    <property type="evidence" value="ECO:0007669"/>
    <property type="project" value="UniProtKB-UniRule"/>
</dbReference>
<dbReference type="GO" id="GO:0008270">
    <property type="term" value="F:zinc ion binding"/>
    <property type="evidence" value="ECO:0007669"/>
    <property type="project" value="UniProtKB-UniRule"/>
</dbReference>
<dbReference type="GO" id="GO:0019556">
    <property type="term" value="P:L-histidine catabolic process to glutamate and formamide"/>
    <property type="evidence" value="ECO:0007669"/>
    <property type="project" value="UniProtKB-UniPathway"/>
</dbReference>
<dbReference type="GO" id="GO:0019557">
    <property type="term" value="P:L-histidine catabolic process to glutamate and formate"/>
    <property type="evidence" value="ECO:0007669"/>
    <property type="project" value="UniProtKB-UniPathway"/>
</dbReference>
<dbReference type="CDD" id="cd01296">
    <property type="entry name" value="Imidazolone-5PH"/>
    <property type="match status" value="1"/>
</dbReference>
<dbReference type="FunFam" id="3.20.20.140:FF:000007">
    <property type="entry name" value="Imidazolonepropionase"/>
    <property type="match status" value="1"/>
</dbReference>
<dbReference type="Gene3D" id="3.20.20.140">
    <property type="entry name" value="Metal-dependent hydrolases"/>
    <property type="match status" value="1"/>
</dbReference>
<dbReference type="Gene3D" id="2.30.40.10">
    <property type="entry name" value="Urease, subunit C, domain 1"/>
    <property type="match status" value="1"/>
</dbReference>
<dbReference type="HAMAP" id="MF_00372">
    <property type="entry name" value="HutI"/>
    <property type="match status" value="1"/>
</dbReference>
<dbReference type="InterPro" id="IPR006680">
    <property type="entry name" value="Amidohydro-rel"/>
</dbReference>
<dbReference type="InterPro" id="IPR005920">
    <property type="entry name" value="HutI"/>
</dbReference>
<dbReference type="InterPro" id="IPR011059">
    <property type="entry name" value="Metal-dep_hydrolase_composite"/>
</dbReference>
<dbReference type="InterPro" id="IPR032466">
    <property type="entry name" value="Metal_Hydrolase"/>
</dbReference>
<dbReference type="NCBIfam" id="TIGR01224">
    <property type="entry name" value="hutI"/>
    <property type="match status" value="1"/>
</dbReference>
<dbReference type="PANTHER" id="PTHR42752">
    <property type="entry name" value="IMIDAZOLONEPROPIONASE"/>
    <property type="match status" value="1"/>
</dbReference>
<dbReference type="PANTHER" id="PTHR42752:SF1">
    <property type="entry name" value="IMIDAZOLONEPROPIONASE-RELATED"/>
    <property type="match status" value="1"/>
</dbReference>
<dbReference type="Pfam" id="PF01979">
    <property type="entry name" value="Amidohydro_1"/>
    <property type="match status" value="1"/>
</dbReference>
<dbReference type="SUPFAM" id="SSF51338">
    <property type="entry name" value="Composite domain of metallo-dependent hydrolases"/>
    <property type="match status" value="1"/>
</dbReference>
<dbReference type="SUPFAM" id="SSF51556">
    <property type="entry name" value="Metallo-dependent hydrolases"/>
    <property type="match status" value="1"/>
</dbReference>
<accession>A9VPT6</accession>
<sequence length="423" mass="46205">MLDTLLINIGQLLTMDQEDGLLRREAMNTLPVIENGAVGIENGVVTFVGTAEEAKGLQAKEVIDCDGKMVSPGLVDPHTHLVFGGSRENEIALKLQGVPYLEILEQGGGILSTVNATKQASKEELVQKAKFHLDRMLSFGVTTVEAKSGYGLDDETEWKQLEATAQLQKEHSIDLVSTFLGAHAVPKEYKGRSKEFLQWMLDLLPEMKEKQLAEFVDIFCETGVFSVEESKEFLLKAKELGFDVKIHADEIDPLGGAEAAAEIGAASADHLVGASDKGIEMLANSNTVATLLPGTTFYLNKESFARGRKMIDEGVAVALATDFNPGSCPTENIQLIMSIAMLKLKMTPEEVWNAVTVNSSYAINRGDVAGKIRVGRKADLVLWDAYNYAYVPYHYGVSHVNTVWKNGNIAYTRGEQSWSTATI</sequence>
<name>HUTI_BACMK</name>
<feature type="chain" id="PRO_1000121533" description="Imidazolonepropionase">
    <location>
        <begin position="1"/>
        <end position="423"/>
    </location>
</feature>
<feature type="binding site" evidence="1">
    <location>
        <position position="78"/>
    </location>
    <ligand>
        <name>Fe(3+)</name>
        <dbReference type="ChEBI" id="CHEBI:29034"/>
    </ligand>
</feature>
<feature type="binding site" evidence="1">
    <location>
        <position position="78"/>
    </location>
    <ligand>
        <name>Zn(2+)</name>
        <dbReference type="ChEBI" id="CHEBI:29105"/>
    </ligand>
</feature>
<feature type="binding site" evidence="1">
    <location>
        <position position="80"/>
    </location>
    <ligand>
        <name>Fe(3+)</name>
        <dbReference type="ChEBI" id="CHEBI:29034"/>
    </ligand>
</feature>
<feature type="binding site" evidence="1">
    <location>
        <position position="80"/>
    </location>
    <ligand>
        <name>Zn(2+)</name>
        <dbReference type="ChEBI" id="CHEBI:29105"/>
    </ligand>
</feature>
<feature type="binding site" evidence="1">
    <location>
        <position position="87"/>
    </location>
    <ligand>
        <name>4-imidazolone-5-propanoate</name>
        <dbReference type="ChEBI" id="CHEBI:77893"/>
    </ligand>
</feature>
<feature type="binding site" evidence="1">
    <location>
        <position position="150"/>
    </location>
    <ligand>
        <name>4-imidazolone-5-propanoate</name>
        <dbReference type="ChEBI" id="CHEBI:77893"/>
    </ligand>
</feature>
<feature type="binding site" evidence="1">
    <location>
        <position position="150"/>
    </location>
    <ligand>
        <name>N-formimidoyl-L-glutamate</name>
        <dbReference type="ChEBI" id="CHEBI:58928"/>
    </ligand>
</feature>
<feature type="binding site" evidence="1">
    <location>
        <position position="183"/>
    </location>
    <ligand>
        <name>4-imidazolone-5-propanoate</name>
        <dbReference type="ChEBI" id="CHEBI:77893"/>
    </ligand>
</feature>
<feature type="binding site" evidence="1">
    <location>
        <position position="247"/>
    </location>
    <ligand>
        <name>Fe(3+)</name>
        <dbReference type="ChEBI" id="CHEBI:29034"/>
    </ligand>
</feature>
<feature type="binding site" evidence="1">
    <location>
        <position position="247"/>
    </location>
    <ligand>
        <name>Zn(2+)</name>
        <dbReference type="ChEBI" id="CHEBI:29105"/>
    </ligand>
</feature>
<feature type="binding site" evidence="1">
    <location>
        <position position="250"/>
    </location>
    <ligand>
        <name>4-imidazolone-5-propanoate</name>
        <dbReference type="ChEBI" id="CHEBI:77893"/>
    </ligand>
</feature>
<feature type="binding site" evidence="1">
    <location>
        <position position="322"/>
    </location>
    <ligand>
        <name>Fe(3+)</name>
        <dbReference type="ChEBI" id="CHEBI:29034"/>
    </ligand>
</feature>
<feature type="binding site" evidence="1">
    <location>
        <position position="322"/>
    </location>
    <ligand>
        <name>Zn(2+)</name>
        <dbReference type="ChEBI" id="CHEBI:29105"/>
    </ligand>
</feature>
<feature type="binding site" evidence="1">
    <location>
        <position position="324"/>
    </location>
    <ligand>
        <name>N-formimidoyl-L-glutamate</name>
        <dbReference type="ChEBI" id="CHEBI:58928"/>
    </ligand>
</feature>
<feature type="binding site" evidence="1">
    <location>
        <position position="326"/>
    </location>
    <ligand>
        <name>N-formimidoyl-L-glutamate</name>
        <dbReference type="ChEBI" id="CHEBI:58928"/>
    </ligand>
</feature>
<feature type="binding site" evidence="1">
    <location>
        <position position="327"/>
    </location>
    <ligand>
        <name>4-imidazolone-5-propanoate</name>
        <dbReference type="ChEBI" id="CHEBI:77893"/>
    </ligand>
</feature>
<protein>
    <recommendedName>
        <fullName evidence="1">Imidazolonepropionase</fullName>
        <ecNumber evidence="1">3.5.2.7</ecNumber>
    </recommendedName>
    <alternativeName>
        <fullName evidence="1">Imidazolone-5-propionate hydrolase</fullName>
    </alternativeName>
</protein>
<keyword id="KW-0963">Cytoplasm</keyword>
<keyword id="KW-0369">Histidine metabolism</keyword>
<keyword id="KW-0378">Hydrolase</keyword>
<keyword id="KW-0408">Iron</keyword>
<keyword id="KW-0479">Metal-binding</keyword>
<keyword id="KW-0862">Zinc</keyword>
<gene>
    <name evidence="1" type="primary">hutI</name>
    <name type="ordered locus">BcerKBAB4_3337</name>
</gene>
<proteinExistence type="inferred from homology"/>